<name>AROA_METCA</name>
<sequence length="437" mass="46079">MHDKDVVFTAGPGGRMQGDIRVPGDKSISHRSVMLGSLAEGVTEVSGFLQAEDCLATMAAFRAMGVEIEGPTEGRLRIHGVGLHGLKPPAAPLDLGNSGTSMRLLSGLLAGQAFDTTLTGDASLVRRPMRRVTEPLRAMGARIDTTEAGTAPLRIAGGSRLKGIDYAMPVASAQVKSCLLLAGLYAEGKTCVTEPAPTRDHTERMLAGFGYPVARDGNRVCIQSGGKLSATRIDVPADISSAAFFMIGAAISPGSDVFLRHVGINPTRTGVIEILREMGADIEILAPREVGGEPVADLRIRYRELRGIRIPEHTVPLAIDEFPALFIAAACATGETVLTGAEELRVKESDRIQAMADGLTTLGIDARPTPDGMVIRGGSFRGGAVDSRGDHRIAMSFSIAALRAPIPIEIHDCANVATSFPNFVELARTLGLDIEVS</sequence>
<feature type="chain" id="PRO_0000325362" description="3-phosphoshikimate 1-carboxyvinyltransferase">
    <location>
        <begin position="1"/>
        <end position="437"/>
    </location>
</feature>
<feature type="active site" description="Proton acceptor" evidence="1">
    <location>
        <position position="320"/>
    </location>
</feature>
<feature type="binding site" evidence="1">
    <location>
        <position position="26"/>
    </location>
    <ligand>
        <name>3-phosphoshikimate</name>
        <dbReference type="ChEBI" id="CHEBI:145989"/>
    </ligand>
</feature>
<feature type="binding site" evidence="1">
    <location>
        <position position="26"/>
    </location>
    <ligand>
        <name>phosphoenolpyruvate</name>
        <dbReference type="ChEBI" id="CHEBI:58702"/>
    </ligand>
</feature>
<feature type="binding site" evidence="1">
    <location>
        <position position="27"/>
    </location>
    <ligand>
        <name>3-phosphoshikimate</name>
        <dbReference type="ChEBI" id="CHEBI:145989"/>
    </ligand>
</feature>
<feature type="binding site" evidence="1">
    <location>
        <position position="31"/>
    </location>
    <ligand>
        <name>3-phosphoshikimate</name>
        <dbReference type="ChEBI" id="CHEBI:145989"/>
    </ligand>
</feature>
<feature type="binding site" evidence="1">
    <location>
        <position position="99"/>
    </location>
    <ligand>
        <name>phosphoenolpyruvate</name>
        <dbReference type="ChEBI" id="CHEBI:58702"/>
    </ligand>
</feature>
<feature type="binding site" evidence="1">
    <location>
        <position position="127"/>
    </location>
    <ligand>
        <name>phosphoenolpyruvate</name>
        <dbReference type="ChEBI" id="CHEBI:58702"/>
    </ligand>
</feature>
<feature type="binding site" evidence="1">
    <location>
        <position position="172"/>
    </location>
    <ligand>
        <name>3-phosphoshikimate</name>
        <dbReference type="ChEBI" id="CHEBI:145989"/>
    </ligand>
</feature>
<feature type="binding site" evidence="1">
    <location>
        <position position="174"/>
    </location>
    <ligand>
        <name>3-phosphoshikimate</name>
        <dbReference type="ChEBI" id="CHEBI:145989"/>
    </ligand>
</feature>
<feature type="binding site" evidence="1">
    <location>
        <position position="174"/>
    </location>
    <ligand>
        <name>phosphoenolpyruvate</name>
        <dbReference type="ChEBI" id="CHEBI:58702"/>
    </ligand>
</feature>
<feature type="binding site" evidence="1">
    <location>
        <position position="320"/>
    </location>
    <ligand>
        <name>3-phosphoshikimate</name>
        <dbReference type="ChEBI" id="CHEBI:145989"/>
    </ligand>
</feature>
<feature type="binding site" evidence="1">
    <location>
        <position position="347"/>
    </location>
    <ligand>
        <name>3-phosphoshikimate</name>
        <dbReference type="ChEBI" id="CHEBI:145989"/>
    </ligand>
</feature>
<feature type="binding site" evidence="1">
    <location>
        <position position="351"/>
    </location>
    <ligand>
        <name>phosphoenolpyruvate</name>
        <dbReference type="ChEBI" id="CHEBI:58702"/>
    </ligand>
</feature>
<feature type="binding site" evidence="1">
    <location>
        <position position="392"/>
    </location>
    <ligand>
        <name>phosphoenolpyruvate</name>
        <dbReference type="ChEBI" id="CHEBI:58702"/>
    </ligand>
</feature>
<protein>
    <recommendedName>
        <fullName evidence="1">3-phosphoshikimate 1-carboxyvinyltransferase</fullName>
        <ecNumber evidence="1">2.5.1.19</ecNumber>
    </recommendedName>
    <alternativeName>
        <fullName evidence="1">5-enolpyruvylshikimate-3-phosphate synthase</fullName>
        <shortName evidence="1">EPSP synthase</shortName>
        <shortName evidence="1">EPSPS</shortName>
    </alternativeName>
</protein>
<reference key="1">
    <citation type="journal article" date="2004" name="PLoS Biol.">
        <title>Genomic insights into methanotrophy: the complete genome sequence of Methylococcus capsulatus (Bath).</title>
        <authorList>
            <person name="Ward N.L."/>
            <person name="Larsen O."/>
            <person name="Sakwa J."/>
            <person name="Bruseth L."/>
            <person name="Khouri H.M."/>
            <person name="Durkin A.S."/>
            <person name="Dimitrov G."/>
            <person name="Jiang L."/>
            <person name="Scanlan D."/>
            <person name="Kang K.H."/>
            <person name="Lewis M.R."/>
            <person name="Nelson K.E."/>
            <person name="Methe B.A."/>
            <person name="Wu M."/>
            <person name="Heidelberg J.F."/>
            <person name="Paulsen I.T."/>
            <person name="Fouts D.E."/>
            <person name="Ravel J."/>
            <person name="Tettelin H."/>
            <person name="Ren Q."/>
            <person name="Read T.D."/>
            <person name="DeBoy R.T."/>
            <person name="Seshadri R."/>
            <person name="Salzberg S.L."/>
            <person name="Jensen H.B."/>
            <person name="Birkeland N.K."/>
            <person name="Nelson W.C."/>
            <person name="Dodson R.J."/>
            <person name="Grindhaug S.H."/>
            <person name="Holt I.E."/>
            <person name="Eidhammer I."/>
            <person name="Jonasen I."/>
            <person name="Vanaken S."/>
            <person name="Utterback T.R."/>
            <person name="Feldblyum T.V."/>
            <person name="Fraser C.M."/>
            <person name="Lillehaug J.R."/>
            <person name="Eisen J.A."/>
        </authorList>
    </citation>
    <scope>NUCLEOTIDE SEQUENCE [LARGE SCALE GENOMIC DNA]</scope>
    <source>
        <strain>ATCC 33009 / NCIMB 11132 / Bath</strain>
    </source>
</reference>
<evidence type="ECO:0000255" key="1">
    <source>
        <dbReference type="HAMAP-Rule" id="MF_00210"/>
    </source>
</evidence>
<evidence type="ECO:0000305" key="2"/>
<organism>
    <name type="scientific">Methylococcus capsulatus (strain ATCC 33009 / NCIMB 11132 / Bath)</name>
    <dbReference type="NCBI Taxonomy" id="243233"/>
    <lineage>
        <taxon>Bacteria</taxon>
        <taxon>Pseudomonadati</taxon>
        <taxon>Pseudomonadota</taxon>
        <taxon>Gammaproteobacteria</taxon>
        <taxon>Methylococcales</taxon>
        <taxon>Methylococcaceae</taxon>
        <taxon>Methylococcus</taxon>
    </lineage>
</organism>
<comment type="function">
    <text evidence="1">Catalyzes the transfer of the enolpyruvyl moiety of phosphoenolpyruvate (PEP) to the 5-hydroxyl of shikimate-3-phosphate (S3P) to produce enolpyruvyl shikimate-3-phosphate and inorganic phosphate.</text>
</comment>
<comment type="catalytic activity">
    <reaction evidence="1">
        <text>3-phosphoshikimate + phosphoenolpyruvate = 5-O-(1-carboxyvinyl)-3-phosphoshikimate + phosphate</text>
        <dbReference type="Rhea" id="RHEA:21256"/>
        <dbReference type="ChEBI" id="CHEBI:43474"/>
        <dbReference type="ChEBI" id="CHEBI:57701"/>
        <dbReference type="ChEBI" id="CHEBI:58702"/>
        <dbReference type="ChEBI" id="CHEBI:145989"/>
        <dbReference type="EC" id="2.5.1.19"/>
    </reaction>
    <physiologicalReaction direction="left-to-right" evidence="1">
        <dbReference type="Rhea" id="RHEA:21257"/>
    </physiologicalReaction>
</comment>
<comment type="pathway">
    <text evidence="1">Metabolic intermediate biosynthesis; chorismate biosynthesis; chorismate from D-erythrose 4-phosphate and phosphoenolpyruvate: step 6/7.</text>
</comment>
<comment type="subunit">
    <text evidence="1">Monomer.</text>
</comment>
<comment type="subcellular location">
    <subcellularLocation>
        <location evidence="1">Cytoplasm</location>
    </subcellularLocation>
</comment>
<comment type="similarity">
    <text evidence="1">Belongs to the EPSP synthase family.</text>
</comment>
<comment type="sequence caution" evidence="2">
    <conflict type="erroneous initiation">
        <sequence resource="EMBL-CDS" id="AAU92307"/>
    </conflict>
    <text>Truncated N-terminus.</text>
</comment>
<gene>
    <name evidence="1" type="primary">aroA</name>
    <name type="ordered locus">MCA1415</name>
</gene>
<keyword id="KW-0028">Amino-acid biosynthesis</keyword>
<keyword id="KW-0057">Aromatic amino acid biosynthesis</keyword>
<keyword id="KW-0963">Cytoplasm</keyword>
<keyword id="KW-1185">Reference proteome</keyword>
<keyword id="KW-0808">Transferase</keyword>
<dbReference type="EC" id="2.5.1.19" evidence="1"/>
<dbReference type="EMBL" id="AE017282">
    <property type="protein sequence ID" value="AAU92307.1"/>
    <property type="status" value="ALT_INIT"/>
    <property type="molecule type" value="Genomic_DNA"/>
</dbReference>
<dbReference type="RefSeq" id="WP_050738184.1">
    <property type="nucleotide sequence ID" value="NC_002977.6"/>
</dbReference>
<dbReference type="SMR" id="Q608S5"/>
<dbReference type="STRING" id="243233.MCA1415"/>
<dbReference type="GeneID" id="88223688"/>
<dbReference type="KEGG" id="mca:MCA1415"/>
<dbReference type="eggNOG" id="COG0128">
    <property type="taxonomic scope" value="Bacteria"/>
</dbReference>
<dbReference type="HOGENOM" id="CLU_024321_0_1_6"/>
<dbReference type="UniPathway" id="UPA00053">
    <property type="reaction ID" value="UER00089"/>
</dbReference>
<dbReference type="Proteomes" id="UP000006821">
    <property type="component" value="Chromosome"/>
</dbReference>
<dbReference type="GO" id="GO:0005737">
    <property type="term" value="C:cytoplasm"/>
    <property type="evidence" value="ECO:0007669"/>
    <property type="project" value="UniProtKB-SubCell"/>
</dbReference>
<dbReference type="GO" id="GO:0003866">
    <property type="term" value="F:3-phosphoshikimate 1-carboxyvinyltransferase activity"/>
    <property type="evidence" value="ECO:0007669"/>
    <property type="project" value="UniProtKB-UniRule"/>
</dbReference>
<dbReference type="GO" id="GO:0008652">
    <property type="term" value="P:amino acid biosynthetic process"/>
    <property type="evidence" value="ECO:0007669"/>
    <property type="project" value="UniProtKB-KW"/>
</dbReference>
<dbReference type="GO" id="GO:0009073">
    <property type="term" value="P:aromatic amino acid family biosynthetic process"/>
    <property type="evidence" value="ECO:0007669"/>
    <property type="project" value="UniProtKB-KW"/>
</dbReference>
<dbReference type="GO" id="GO:0009423">
    <property type="term" value="P:chorismate biosynthetic process"/>
    <property type="evidence" value="ECO:0007669"/>
    <property type="project" value="UniProtKB-UniRule"/>
</dbReference>
<dbReference type="CDD" id="cd01556">
    <property type="entry name" value="EPSP_synthase"/>
    <property type="match status" value="1"/>
</dbReference>
<dbReference type="FunFam" id="3.65.10.10:FF:000005">
    <property type="entry name" value="3-phosphoshikimate 1-carboxyvinyltransferase"/>
    <property type="match status" value="1"/>
</dbReference>
<dbReference type="FunFam" id="3.65.10.10:FF:000006">
    <property type="entry name" value="3-phosphoshikimate 1-carboxyvinyltransferase"/>
    <property type="match status" value="1"/>
</dbReference>
<dbReference type="Gene3D" id="3.65.10.10">
    <property type="entry name" value="Enolpyruvate transferase domain"/>
    <property type="match status" value="2"/>
</dbReference>
<dbReference type="HAMAP" id="MF_00210">
    <property type="entry name" value="EPSP_synth"/>
    <property type="match status" value="1"/>
</dbReference>
<dbReference type="InterPro" id="IPR001986">
    <property type="entry name" value="Enolpyruvate_Tfrase_dom"/>
</dbReference>
<dbReference type="InterPro" id="IPR036968">
    <property type="entry name" value="Enolpyruvate_Tfrase_sf"/>
</dbReference>
<dbReference type="InterPro" id="IPR006264">
    <property type="entry name" value="EPSP_synthase"/>
</dbReference>
<dbReference type="InterPro" id="IPR023193">
    <property type="entry name" value="EPSP_synthase_CS"/>
</dbReference>
<dbReference type="InterPro" id="IPR013792">
    <property type="entry name" value="RNA3'P_cycl/enolpyr_Trfase_a/b"/>
</dbReference>
<dbReference type="NCBIfam" id="TIGR01356">
    <property type="entry name" value="aroA"/>
    <property type="match status" value="1"/>
</dbReference>
<dbReference type="PANTHER" id="PTHR21090">
    <property type="entry name" value="AROM/DEHYDROQUINATE SYNTHASE"/>
    <property type="match status" value="1"/>
</dbReference>
<dbReference type="PANTHER" id="PTHR21090:SF5">
    <property type="entry name" value="PENTAFUNCTIONAL AROM POLYPEPTIDE"/>
    <property type="match status" value="1"/>
</dbReference>
<dbReference type="Pfam" id="PF00275">
    <property type="entry name" value="EPSP_synthase"/>
    <property type="match status" value="1"/>
</dbReference>
<dbReference type="PIRSF" id="PIRSF000505">
    <property type="entry name" value="EPSPS"/>
    <property type="match status" value="1"/>
</dbReference>
<dbReference type="SUPFAM" id="SSF55205">
    <property type="entry name" value="EPT/RTPC-like"/>
    <property type="match status" value="1"/>
</dbReference>
<dbReference type="PROSITE" id="PS00104">
    <property type="entry name" value="EPSP_SYNTHASE_1"/>
    <property type="match status" value="1"/>
</dbReference>
<dbReference type="PROSITE" id="PS00885">
    <property type="entry name" value="EPSP_SYNTHASE_2"/>
    <property type="match status" value="1"/>
</dbReference>
<accession>Q608S5</accession>
<proteinExistence type="inferred from homology"/>